<accession>Q5K0C8</accession>
<sequence>MKLTCVLIITVLFLTASQLITADYSRGQRQYRAVRLGDEMRNFKGARDCGGQGEGCYTQPCCPGLRCRGGGTGGGSCQP</sequence>
<dbReference type="EMBL" id="AJ851180">
    <property type="protein sequence ID" value="CAH64853.1"/>
    <property type="molecule type" value="mRNA"/>
</dbReference>
<dbReference type="SMR" id="Q5K0C8"/>
<dbReference type="ConoServer" id="1069">
    <property type="toxin name" value="Conotoxin-8 precursor"/>
</dbReference>
<dbReference type="GO" id="GO:0005576">
    <property type="term" value="C:extracellular region"/>
    <property type="evidence" value="ECO:0007669"/>
    <property type="project" value="UniProtKB-SubCell"/>
</dbReference>
<dbReference type="GO" id="GO:0008200">
    <property type="term" value="F:ion channel inhibitor activity"/>
    <property type="evidence" value="ECO:0007669"/>
    <property type="project" value="InterPro"/>
</dbReference>
<dbReference type="GO" id="GO:0090729">
    <property type="term" value="F:toxin activity"/>
    <property type="evidence" value="ECO:0007669"/>
    <property type="project" value="UniProtKB-KW"/>
</dbReference>
<dbReference type="InterPro" id="IPR004214">
    <property type="entry name" value="Conotoxin"/>
</dbReference>
<dbReference type="Pfam" id="PF02950">
    <property type="entry name" value="Conotoxin"/>
    <property type="match status" value="1"/>
</dbReference>
<keyword id="KW-1015">Disulfide bond</keyword>
<keyword id="KW-0960">Knottin</keyword>
<keyword id="KW-0964">Secreted</keyword>
<keyword id="KW-0732">Signal</keyword>
<keyword id="KW-0800">Toxin</keyword>
<protein>
    <recommendedName>
        <fullName>Conotoxin 8</fullName>
    </recommendedName>
</protein>
<organism>
    <name type="scientific">Conus vexillum</name>
    <name type="common">Flag cone</name>
    <dbReference type="NCBI Taxonomy" id="89431"/>
    <lineage>
        <taxon>Eukaryota</taxon>
        <taxon>Metazoa</taxon>
        <taxon>Spiralia</taxon>
        <taxon>Lophotrochozoa</taxon>
        <taxon>Mollusca</taxon>
        <taxon>Gastropoda</taxon>
        <taxon>Caenogastropoda</taxon>
        <taxon>Neogastropoda</taxon>
        <taxon>Conoidea</taxon>
        <taxon>Conidae</taxon>
        <taxon>Conus</taxon>
        <taxon>Rhizoconus</taxon>
    </lineage>
</organism>
<reference key="1">
    <citation type="journal article" date="2005" name="Peptides">
        <title>Direct cDNA cloning of novel conopeptide precursors of the O-superfamily.</title>
        <authorList>
            <person name="Kauferstein S."/>
            <person name="Melaun C."/>
            <person name="Mebs D."/>
        </authorList>
    </citation>
    <scope>NUCLEOTIDE SEQUENCE [MRNA]</scope>
    <source>
        <tissue>Venom duct</tissue>
    </source>
</reference>
<evidence type="ECO:0000250" key="1"/>
<evidence type="ECO:0000255" key="2"/>
<evidence type="ECO:0000305" key="3"/>
<comment type="subcellular location">
    <subcellularLocation>
        <location evidence="1">Secreted</location>
    </subcellularLocation>
</comment>
<comment type="tissue specificity">
    <text>Expressed by the venom duct.</text>
</comment>
<comment type="domain">
    <text evidence="1">The presence of a 'disulfide through disulfide knot' structurally defines this protein as a knottin.</text>
</comment>
<comment type="domain">
    <text>The cysteine framework is VI/VII (C-C-CC-C-C).</text>
</comment>
<comment type="similarity">
    <text evidence="3">Belongs to the conotoxin O1 superfamily.</text>
</comment>
<feature type="signal peptide" evidence="2">
    <location>
        <begin position="1"/>
        <end position="22"/>
    </location>
</feature>
<feature type="propeptide" id="PRO_0000035005" evidence="1">
    <location>
        <begin position="23"/>
        <end position="47"/>
    </location>
</feature>
<feature type="peptide" id="PRO_0000035006" description="Conotoxin 8">
    <location>
        <begin position="48"/>
        <end position="79"/>
    </location>
</feature>
<feature type="disulfide bond" evidence="1">
    <location>
        <begin position="49"/>
        <end position="62"/>
    </location>
</feature>
<feature type="disulfide bond" evidence="1">
    <location>
        <begin position="56"/>
        <end position="67"/>
    </location>
</feature>
<feature type="disulfide bond" evidence="1">
    <location>
        <begin position="61"/>
        <end position="77"/>
    </location>
</feature>
<name>O168_CONVX</name>
<proteinExistence type="evidence at transcript level"/>